<name>KDSA_HYDCU</name>
<accession>Q31G67</accession>
<keyword id="KW-0963">Cytoplasm</keyword>
<keyword id="KW-0448">Lipopolysaccharide biosynthesis</keyword>
<keyword id="KW-0808">Transferase</keyword>
<reference key="1">
    <citation type="journal article" date="2006" name="PLoS Biol.">
        <title>The genome of deep-sea vent chemolithoautotroph Thiomicrospira crunogena XCL-2.</title>
        <authorList>
            <person name="Scott K.M."/>
            <person name="Sievert S.M."/>
            <person name="Abril F.N."/>
            <person name="Ball L.A."/>
            <person name="Barrett C.J."/>
            <person name="Blake R.A."/>
            <person name="Boller A.J."/>
            <person name="Chain P.S.G."/>
            <person name="Clark J.A."/>
            <person name="Davis C.R."/>
            <person name="Detter C."/>
            <person name="Do K.F."/>
            <person name="Dobrinski K.P."/>
            <person name="Faza B.I."/>
            <person name="Fitzpatrick K.A."/>
            <person name="Freyermuth S.K."/>
            <person name="Harmer T.L."/>
            <person name="Hauser L.J."/>
            <person name="Huegler M."/>
            <person name="Kerfeld C.A."/>
            <person name="Klotz M.G."/>
            <person name="Kong W.W."/>
            <person name="Land M."/>
            <person name="Lapidus A."/>
            <person name="Larimer F.W."/>
            <person name="Longo D.L."/>
            <person name="Lucas S."/>
            <person name="Malfatti S.A."/>
            <person name="Massey S.E."/>
            <person name="Martin D.D."/>
            <person name="McCuddin Z."/>
            <person name="Meyer F."/>
            <person name="Moore J.L."/>
            <person name="Ocampo L.H. Jr."/>
            <person name="Paul J.H."/>
            <person name="Paulsen I.T."/>
            <person name="Reep D.K."/>
            <person name="Ren Q."/>
            <person name="Ross R.L."/>
            <person name="Sato P.Y."/>
            <person name="Thomas P."/>
            <person name="Tinkham L.E."/>
            <person name="Zeruth G.T."/>
        </authorList>
    </citation>
    <scope>NUCLEOTIDE SEQUENCE [LARGE SCALE GENOMIC DNA]</scope>
    <source>
        <strain>DSM 25203 / XCL-2</strain>
    </source>
</reference>
<protein>
    <recommendedName>
        <fullName evidence="1">2-dehydro-3-deoxyphosphooctonate aldolase</fullName>
        <ecNumber evidence="1">2.5.1.55</ecNumber>
    </recommendedName>
    <alternativeName>
        <fullName evidence="1">3-deoxy-D-manno-octulosonic acid 8-phosphate synthase</fullName>
    </alternativeName>
    <alternativeName>
        <fullName evidence="1">KDO-8-phosphate synthase</fullName>
        <shortName evidence="1">KDO 8-P synthase</shortName>
        <shortName evidence="1">KDOPS</shortName>
    </alternativeName>
    <alternativeName>
        <fullName evidence="1">Phospho-2-dehydro-3-deoxyoctonate aldolase</fullName>
    </alternativeName>
</protein>
<organism>
    <name type="scientific">Hydrogenovibrio crunogenus (strain DSM 25203 / XCL-2)</name>
    <name type="common">Thiomicrospira crunogena</name>
    <dbReference type="NCBI Taxonomy" id="317025"/>
    <lineage>
        <taxon>Bacteria</taxon>
        <taxon>Pseudomonadati</taxon>
        <taxon>Pseudomonadota</taxon>
        <taxon>Gammaproteobacteria</taxon>
        <taxon>Thiotrichales</taxon>
        <taxon>Piscirickettsiaceae</taxon>
        <taxon>Hydrogenovibrio</taxon>
    </lineage>
</organism>
<proteinExistence type="inferred from homology"/>
<comment type="catalytic activity">
    <reaction evidence="1">
        <text>D-arabinose 5-phosphate + phosphoenolpyruvate + H2O = 3-deoxy-alpha-D-manno-2-octulosonate-8-phosphate + phosphate</text>
        <dbReference type="Rhea" id="RHEA:14053"/>
        <dbReference type="ChEBI" id="CHEBI:15377"/>
        <dbReference type="ChEBI" id="CHEBI:43474"/>
        <dbReference type="ChEBI" id="CHEBI:57693"/>
        <dbReference type="ChEBI" id="CHEBI:58702"/>
        <dbReference type="ChEBI" id="CHEBI:85985"/>
        <dbReference type="EC" id="2.5.1.55"/>
    </reaction>
</comment>
<comment type="pathway">
    <text evidence="1">Carbohydrate biosynthesis; 3-deoxy-D-manno-octulosonate biosynthesis; 3-deoxy-D-manno-octulosonate from D-ribulose 5-phosphate: step 2/3.</text>
</comment>
<comment type="pathway">
    <text evidence="1">Bacterial outer membrane biogenesis; lipopolysaccharide biosynthesis.</text>
</comment>
<comment type="subcellular location">
    <subcellularLocation>
        <location evidence="1">Cytoplasm</location>
    </subcellularLocation>
</comment>
<comment type="similarity">
    <text evidence="1">Belongs to the KdsA family.</text>
</comment>
<dbReference type="EC" id="2.5.1.55" evidence="1"/>
<dbReference type="EMBL" id="CP000109">
    <property type="protein sequence ID" value="ABB41856.1"/>
    <property type="molecule type" value="Genomic_DNA"/>
</dbReference>
<dbReference type="SMR" id="Q31G67"/>
<dbReference type="STRING" id="317025.Tcr_1261"/>
<dbReference type="KEGG" id="tcx:Tcr_1261"/>
<dbReference type="eggNOG" id="COG2877">
    <property type="taxonomic scope" value="Bacteria"/>
</dbReference>
<dbReference type="HOGENOM" id="CLU_036666_0_0_6"/>
<dbReference type="OrthoDB" id="9776934at2"/>
<dbReference type="UniPathway" id="UPA00030"/>
<dbReference type="UniPathway" id="UPA00357">
    <property type="reaction ID" value="UER00474"/>
</dbReference>
<dbReference type="GO" id="GO:0005737">
    <property type="term" value="C:cytoplasm"/>
    <property type="evidence" value="ECO:0007669"/>
    <property type="project" value="UniProtKB-SubCell"/>
</dbReference>
<dbReference type="GO" id="GO:0008676">
    <property type="term" value="F:3-deoxy-8-phosphooctulonate synthase activity"/>
    <property type="evidence" value="ECO:0007669"/>
    <property type="project" value="UniProtKB-UniRule"/>
</dbReference>
<dbReference type="GO" id="GO:0019294">
    <property type="term" value="P:keto-3-deoxy-D-manno-octulosonic acid biosynthetic process"/>
    <property type="evidence" value="ECO:0007669"/>
    <property type="project" value="UniProtKB-UniRule"/>
</dbReference>
<dbReference type="Gene3D" id="3.20.20.70">
    <property type="entry name" value="Aldolase class I"/>
    <property type="match status" value="1"/>
</dbReference>
<dbReference type="HAMAP" id="MF_00056">
    <property type="entry name" value="KDO8P_synth"/>
    <property type="match status" value="1"/>
</dbReference>
<dbReference type="InterPro" id="IPR013785">
    <property type="entry name" value="Aldolase_TIM"/>
</dbReference>
<dbReference type="InterPro" id="IPR006218">
    <property type="entry name" value="DAHP1/KDSA"/>
</dbReference>
<dbReference type="InterPro" id="IPR006269">
    <property type="entry name" value="KDO8P_synthase"/>
</dbReference>
<dbReference type="NCBIfam" id="TIGR01362">
    <property type="entry name" value="KDO8P_synth"/>
    <property type="match status" value="1"/>
</dbReference>
<dbReference type="NCBIfam" id="NF003543">
    <property type="entry name" value="PRK05198.1"/>
    <property type="match status" value="1"/>
</dbReference>
<dbReference type="PANTHER" id="PTHR21057">
    <property type="entry name" value="PHOSPHO-2-DEHYDRO-3-DEOXYHEPTONATE ALDOLASE"/>
    <property type="match status" value="1"/>
</dbReference>
<dbReference type="Pfam" id="PF00793">
    <property type="entry name" value="DAHP_synth_1"/>
    <property type="match status" value="1"/>
</dbReference>
<dbReference type="SUPFAM" id="SSF51569">
    <property type="entry name" value="Aldolase"/>
    <property type="match status" value="1"/>
</dbReference>
<feature type="chain" id="PRO_1000117789" description="2-dehydro-3-deoxyphosphooctonate aldolase">
    <location>
        <begin position="1"/>
        <end position="277"/>
    </location>
</feature>
<evidence type="ECO:0000255" key="1">
    <source>
        <dbReference type="HAMAP-Rule" id="MF_00056"/>
    </source>
</evidence>
<sequence length="277" mass="30220">MKLCGFDVGIDQPLFLIAGPCVIESEQLAIETAGQLKELTDALGIPFIYKSSYDKANRSSTKSFRGLGVEEGLRILQKVKDEIGVPVLTDVHEDTPLDEVASVVDVMQTPAFLVRQTNFIQNVCRQGLPVNIKKGQFQAPWDMDQVVAKAREVGNDQIMVCDRGTSFGYNTLISDMRGLASMRQTGCPVVFDATHSVQQPGGQGTTSGGQREMVPVLARAAIAAGISGVFMETHPDPENALSDGPNMWPISRLKPLLETMKELDEVVKRHGFIEDQS</sequence>
<gene>
    <name evidence="1" type="primary">kdsA</name>
    <name type="ordered locus">Tcr_1261</name>
</gene>